<keyword id="KW-0119">Carbohydrate metabolism</keyword>
<keyword id="KW-1003">Cell membrane</keyword>
<keyword id="KW-0961">Cell wall biogenesis/degradation</keyword>
<keyword id="KW-0325">Glycoprotein</keyword>
<keyword id="KW-0378">Hydrolase</keyword>
<keyword id="KW-0472">Membrane</keyword>
<keyword id="KW-0624">Polysaccharide degradation</keyword>
<keyword id="KW-1185">Reference proteome</keyword>
<keyword id="KW-0735">Signal-anchor</keyword>
<keyword id="KW-0812">Transmembrane</keyword>
<keyword id="KW-1133">Transmembrane helix</keyword>
<feature type="chain" id="PRO_0000395126" description="Probable glucan endo-1,3-beta-glucosidase btgC">
    <location>
        <begin position="1"/>
        <end position="685"/>
    </location>
</feature>
<feature type="topological domain" description="Cytoplasmic" evidence="3">
    <location>
        <begin position="1"/>
        <end position="312"/>
    </location>
</feature>
<feature type="transmembrane region" description="Helical; Signal-anchor for type II membrane protein" evidence="3">
    <location>
        <begin position="313"/>
        <end position="333"/>
    </location>
</feature>
<feature type="topological domain" description="Extracellular" evidence="3">
    <location>
        <begin position="334"/>
        <end position="685"/>
    </location>
</feature>
<feature type="region of interest" description="Disordered" evidence="4">
    <location>
        <begin position="1"/>
        <end position="96"/>
    </location>
</feature>
<feature type="region of interest" description="Disordered" evidence="4">
    <location>
        <begin position="119"/>
        <end position="168"/>
    </location>
</feature>
<feature type="region of interest" description="Disordered" evidence="4">
    <location>
        <begin position="180"/>
        <end position="202"/>
    </location>
</feature>
<feature type="region of interest" description="Disordered" evidence="4">
    <location>
        <begin position="335"/>
        <end position="369"/>
    </location>
</feature>
<feature type="compositionally biased region" description="Polar residues" evidence="4">
    <location>
        <begin position="47"/>
        <end position="61"/>
    </location>
</feature>
<feature type="compositionally biased region" description="Polar residues" evidence="4">
    <location>
        <begin position="73"/>
        <end position="90"/>
    </location>
</feature>
<feature type="compositionally biased region" description="Polar residues" evidence="4">
    <location>
        <begin position="345"/>
        <end position="360"/>
    </location>
</feature>
<feature type="active site" description="Proton donor" evidence="2">
    <location>
        <position position="488"/>
    </location>
</feature>
<feature type="active site" description="Nucleophile" evidence="2">
    <location>
        <position position="587"/>
    </location>
</feature>
<feature type="glycosylation site" description="N-linked (GlcNAc...) asparagine" evidence="3">
    <location>
        <position position="405"/>
    </location>
</feature>
<feature type="glycosylation site" description="N-linked (GlcNAc...) asparagine" evidence="3">
    <location>
        <position position="428"/>
    </location>
</feature>
<feature type="glycosylation site" description="N-linked (GlcNAc...) asparagine" evidence="3">
    <location>
        <position position="456"/>
    </location>
</feature>
<feature type="glycosylation site" description="N-linked (GlcNAc...) asparagine" evidence="3">
    <location>
        <position position="632"/>
    </location>
</feature>
<name>BTGC_ASPOR</name>
<sequence>MSGPHRSFSFNQGDDGAGDAGDVSPIRSQEGHFMNSPPRHNDVSPVSARSQAMGSSPSSGFLSAHEHGDRGWGQNSGHTQAMRTNSTTPGMDNLGPAAVGGGISGIALGVANSHNRQSGIDAFRDTDGRNLPAERGYNTTGSDNPYVPTPPGGGSHGSAENLRPRDSYGSNVALGAAAAPAGQLTPGGSNPSQRSLFDSPYQGVGAMDAGPYQRQSAYSAAGDYPLVINPDEIADDGDDGFTPVPNGKSASSNARAIPAAAAGGAAGGGLFGLFKSKKADNPSYGPVPGAGLEAGEKSRWVKPTPGGGSRKRGWIVGLALAFIVVGAIVGGAVGGTLGNRENEAPDTTKSASSDTESNGDLNKDSSEIKDLMNNPDLHKVFPGMDYTPWGVQYPLCLKYPPSQNNVTRDVAVLSQLTNTVRLYGTDCNQTEMVLHAIDRLELKDMKVWLGVWIDSNDTTNDRQIKQLYKVLDDTKDISIFKGAIVGNEALYRAGNDIASAKKKLISYMDDVRNHFKEKNYDLPIATSDLGDNWKEDLVTATDLVMSNVHPFFAGVTAKEAAGWTWNFWNQNDVPLTKGTNKKQVISEVGWPSGGGNDCGSNNKCTDDTSGSVAGIDEMNQFMSDWICQALENGTDYFWFEAFDEPWKVQYNTKDENWEDKWGLMDAARKLKPGLKIPDCGGKTAA</sequence>
<evidence type="ECO:0000250" key="1"/>
<evidence type="ECO:0000250" key="2">
    <source>
        <dbReference type="UniProtKB" id="O22317"/>
    </source>
</evidence>
<evidence type="ECO:0000255" key="3"/>
<evidence type="ECO:0000256" key="4">
    <source>
        <dbReference type="SAM" id="MobiDB-lite"/>
    </source>
</evidence>
<evidence type="ECO:0000305" key="5"/>
<accession>Q2U492</accession>
<protein>
    <recommendedName>
        <fullName>Probable glucan endo-1,3-beta-glucosidase btgC</fullName>
        <ecNumber>3.2.1.39</ecNumber>
    </recommendedName>
    <alternativeName>
        <fullName>Endo-1,3-beta-glucanase btgC</fullName>
    </alternativeName>
    <alternativeName>
        <fullName>Laminarinase btgC</fullName>
    </alternativeName>
</protein>
<dbReference type="EC" id="3.2.1.39"/>
<dbReference type="EMBL" id="BA000054">
    <property type="protein sequence ID" value="BAE63623.1"/>
    <property type="molecule type" value="Genomic_DNA"/>
</dbReference>
<dbReference type="RefSeq" id="XP_001824756.1">
    <property type="nucleotide sequence ID" value="XM_001824704.2"/>
</dbReference>
<dbReference type="SMR" id="Q2U492"/>
<dbReference type="STRING" id="510516.Q2U492"/>
<dbReference type="CAZy" id="GH17">
    <property type="family name" value="Glycoside Hydrolase Family 17"/>
</dbReference>
<dbReference type="GlyCosmos" id="Q2U492">
    <property type="glycosylation" value="4 sites, No reported glycans"/>
</dbReference>
<dbReference type="EnsemblFungi" id="BAE63623">
    <property type="protein sequence ID" value="BAE63623"/>
    <property type="gene ID" value="AO090020000436"/>
</dbReference>
<dbReference type="GeneID" id="5997083"/>
<dbReference type="KEGG" id="aor:AO090020000436"/>
<dbReference type="HOGENOM" id="CLU_011476_0_1_1"/>
<dbReference type="OrthoDB" id="87524at5052"/>
<dbReference type="Proteomes" id="UP000006564">
    <property type="component" value="Chromosome 6"/>
</dbReference>
<dbReference type="GO" id="GO:0009986">
    <property type="term" value="C:cell surface"/>
    <property type="evidence" value="ECO:0007669"/>
    <property type="project" value="TreeGrafter"/>
</dbReference>
<dbReference type="GO" id="GO:0005576">
    <property type="term" value="C:extracellular region"/>
    <property type="evidence" value="ECO:0007669"/>
    <property type="project" value="TreeGrafter"/>
</dbReference>
<dbReference type="GO" id="GO:0009277">
    <property type="term" value="C:fungal-type cell wall"/>
    <property type="evidence" value="ECO:0007669"/>
    <property type="project" value="TreeGrafter"/>
</dbReference>
<dbReference type="GO" id="GO:0005886">
    <property type="term" value="C:plasma membrane"/>
    <property type="evidence" value="ECO:0007669"/>
    <property type="project" value="UniProtKB-SubCell"/>
</dbReference>
<dbReference type="GO" id="GO:0042973">
    <property type="term" value="F:glucan endo-1,3-beta-D-glucosidase activity"/>
    <property type="evidence" value="ECO:0007669"/>
    <property type="project" value="UniProtKB-EC"/>
</dbReference>
<dbReference type="GO" id="GO:0071555">
    <property type="term" value="P:cell wall organization"/>
    <property type="evidence" value="ECO:0007669"/>
    <property type="project" value="UniProtKB-KW"/>
</dbReference>
<dbReference type="GO" id="GO:0000272">
    <property type="term" value="P:polysaccharide catabolic process"/>
    <property type="evidence" value="ECO:0007669"/>
    <property type="project" value="UniProtKB-KW"/>
</dbReference>
<dbReference type="FunFam" id="3.20.20.80:FF:000151">
    <property type="entry name" value="Glucan endo-1,3-beta-glucosidase btgC"/>
    <property type="match status" value="1"/>
</dbReference>
<dbReference type="Gene3D" id="3.20.20.80">
    <property type="entry name" value="Glycosidases"/>
    <property type="match status" value="1"/>
</dbReference>
<dbReference type="InterPro" id="IPR050732">
    <property type="entry name" value="Beta-glucan_modifiers"/>
</dbReference>
<dbReference type="InterPro" id="IPR017853">
    <property type="entry name" value="Glycoside_hydrolase_SF"/>
</dbReference>
<dbReference type="PANTHER" id="PTHR16631">
    <property type="entry name" value="GLUCAN 1,3-BETA-GLUCOSIDASE"/>
    <property type="match status" value="1"/>
</dbReference>
<dbReference type="PANTHER" id="PTHR16631:SF17">
    <property type="entry name" value="GLUCAN ENDO-1,3-BETA-GLUCOSIDASE BTGC"/>
    <property type="match status" value="1"/>
</dbReference>
<dbReference type="SUPFAM" id="SSF51445">
    <property type="entry name" value="(Trans)glycosidases"/>
    <property type="match status" value="1"/>
</dbReference>
<organism>
    <name type="scientific">Aspergillus oryzae (strain ATCC 42149 / RIB 40)</name>
    <name type="common">Yellow koji mold</name>
    <dbReference type="NCBI Taxonomy" id="510516"/>
    <lineage>
        <taxon>Eukaryota</taxon>
        <taxon>Fungi</taxon>
        <taxon>Dikarya</taxon>
        <taxon>Ascomycota</taxon>
        <taxon>Pezizomycotina</taxon>
        <taxon>Eurotiomycetes</taxon>
        <taxon>Eurotiomycetidae</taxon>
        <taxon>Eurotiales</taxon>
        <taxon>Aspergillaceae</taxon>
        <taxon>Aspergillus</taxon>
        <taxon>Aspergillus subgen. Circumdati</taxon>
    </lineage>
</organism>
<reference key="1">
    <citation type="journal article" date="2005" name="Nature">
        <title>Genome sequencing and analysis of Aspergillus oryzae.</title>
        <authorList>
            <person name="Machida M."/>
            <person name="Asai K."/>
            <person name="Sano M."/>
            <person name="Tanaka T."/>
            <person name="Kumagai T."/>
            <person name="Terai G."/>
            <person name="Kusumoto K."/>
            <person name="Arima T."/>
            <person name="Akita O."/>
            <person name="Kashiwagi Y."/>
            <person name="Abe K."/>
            <person name="Gomi K."/>
            <person name="Horiuchi H."/>
            <person name="Kitamoto K."/>
            <person name="Kobayashi T."/>
            <person name="Takeuchi M."/>
            <person name="Denning D.W."/>
            <person name="Galagan J.E."/>
            <person name="Nierman W.C."/>
            <person name="Yu J."/>
            <person name="Archer D.B."/>
            <person name="Bennett J.W."/>
            <person name="Bhatnagar D."/>
            <person name="Cleveland T.E."/>
            <person name="Fedorova N.D."/>
            <person name="Gotoh O."/>
            <person name="Horikawa H."/>
            <person name="Hosoyama A."/>
            <person name="Ichinomiya M."/>
            <person name="Igarashi R."/>
            <person name="Iwashita K."/>
            <person name="Juvvadi P.R."/>
            <person name="Kato M."/>
            <person name="Kato Y."/>
            <person name="Kin T."/>
            <person name="Kokubun A."/>
            <person name="Maeda H."/>
            <person name="Maeyama N."/>
            <person name="Maruyama J."/>
            <person name="Nagasaki H."/>
            <person name="Nakajima T."/>
            <person name="Oda K."/>
            <person name="Okada K."/>
            <person name="Paulsen I."/>
            <person name="Sakamoto K."/>
            <person name="Sawano T."/>
            <person name="Takahashi M."/>
            <person name="Takase K."/>
            <person name="Terabayashi Y."/>
            <person name="Wortman J.R."/>
            <person name="Yamada O."/>
            <person name="Yamagata Y."/>
            <person name="Anazawa H."/>
            <person name="Hata Y."/>
            <person name="Koide Y."/>
            <person name="Komori T."/>
            <person name="Koyama Y."/>
            <person name="Minetoki T."/>
            <person name="Suharnan S."/>
            <person name="Tanaka A."/>
            <person name="Isono K."/>
            <person name="Kuhara S."/>
            <person name="Ogasawara N."/>
            <person name="Kikuchi H."/>
        </authorList>
    </citation>
    <scope>NUCLEOTIDE SEQUENCE [LARGE SCALE GENOMIC DNA]</scope>
    <source>
        <strain>ATCC 42149 / RIB 40</strain>
    </source>
</reference>
<proteinExistence type="inferred from homology"/>
<gene>
    <name type="primary">btgC</name>
    <name type="ORF">AO090020000436</name>
</gene>
<comment type="function">
    <text evidence="1">Glucanases play a role in cell expansion during growth, in cell-cell fusion during mating, and in spore release during sporulation. This enzyme may be involved in beta-glucan degradation. Active on laminarin and lichenan (By similarity).</text>
</comment>
<comment type="catalytic activity">
    <reaction>
        <text>Hydrolysis of (1-&gt;3)-beta-D-glucosidic linkages in (1-&gt;3)-beta-D-glucans.</text>
        <dbReference type="EC" id="3.2.1.39"/>
    </reaction>
</comment>
<comment type="subcellular location">
    <subcellularLocation>
        <location evidence="1">Cell membrane</location>
        <topology evidence="1">Single-pass type II membrane protein</topology>
    </subcellularLocation>
</comment>
<comment type="similarity">
    <text evidence="5">Belongs to the glycosyl hydrolase 17 family.</text>
</comment>